<reference key="1">
    <citation type="journal article" date="2021" name="Acta Pharm. Sin. B (APSB)">
        <title>Tricarbocyclic core formation of tyrosine-decahydrofluorenes implies a three-enzyme cascade with XenF-mediated sigmatropic rearrangement as a prerequisite.</title>
        <authorList>
            <person name="Liu Z."/>
            <person name="Li W."/>
            <person name="Zhang P."/>
            <person name="Fan J."/>
            <person name="Zhang F."/>
            <person name="Wang C."/>
            <person name="Li S."/>
            <person name="Sun Y."/>
            <person name="Chen S."/>
            <person name="Yin W."/>
        </authorList>
    </citation>
    <scope>NUCLEOTIDE SEQUENCE [GENOMIC DNA]</scope>
    <scope>FUNCTION</scope>
    <scope>DISRUPTION PHENOTYPE</scope>
    <scope>CATALYTIC ACTIVITY</scope>
    <scope>PATHWAY</scope>
    <source>
        <strain>ML-31</strain>
    </source>
</reference>
<dbReference type="EC" id="3.7.1.-" evidence="3"/>
<dbReference type="EMBL" id="MT876600">
    <property type="protein sequence ID" value="QOJ72659.1"/>
    <property type="molecule type" value="Genomic_DNA"/>
</dbReference>
<dbReference type="SMR" id="A0A7L9F0X4"/>
<dbReference type="GO" id="GO:0016787">
    <property type="term" value="F:hydrolase activity"/>
    <property type="evidence" value="ECO:0007669"/>
    <property type="project" value="UniProtKB-KW"/>
</dbReference>
<dbReference type="Gene3D" id="1.20.1440.110">
    <property type="entry name" value="acylaminoacyl peptidase"/>
    <property type="match status" value="1"/>
</dbReference>
<dbReference type="Gene3D" id="3.40.50.1820">
    <property type="entry name" value="alpha/beta hydrolase"/>
    <property type="match status" value="1"/>
</dbReference>
<dbReference type="InterPro" id="IPR029058">
    <property type="entry name" value="AB_hydrolase_fold"/>
</dbReference>
<dbReference type="InterPro" id="IPR010520">
    <property type="entry name" value="FrsA-like"/>
</dbReference>
<dbReference type="InterPro" id="IPR050261">
    <property type="entry name" value="FrsA_esterase"/>
</dbReference>
<dbReference type="PANTHER" id="PTHR22946:SF13">
    <property type="entry name" value="ALPHA_BETA HYDROLASE PSOB"/>
    <property type="match status" value="1"/>
</dbReference>
<dbReference type="PANTHER" id="PTHR22946">
    <property type="entry name" value="DIENELACTONE HYDROLASE DOMAIN-CONTAINING PROTEIN-RELATED"/>
    <property type="match status" value="1"/>
</dbReference>
<dbReference type="Pfam" id="PF06500">
    <property type="entry name" value="FrsA-like"/>
    <property type="match status" value="1"/>
</dbReference>
<dbReference type="SUPFAM" id="SSF53474">
    <property type="entry name" value="alpha/beta-Hydrolases"/>
    <property type="match status" value="1"/>
</dbReference>
<accession>A0A7L9F0X4</accession>
<comment type="function">
    <text evidence="3">Alpha/beta hydrolase; part of the gene cluster that mediates the biosynthesis of xenoacremones such as xenoacremone A, a compound that shows inhibitory activity toward the PI3K/AKT signaling pathway and which has the ability to induce apoptosis of A549 lung cancer cells (PubMed:34900544). Within the pathway, cooperation of the hybrid PKS-NRPS xenE and the trans-acting enoyl reductase xenG is responsible for the formation of the reduced tyrosine-nonaketide derivative (PubMed:34900544). The alpha/beta hydrolase xenA then accelerates intramolecular nucleophilic attack to give a pyrrolidone derivative (PubMed:34900544). Subsequently, three enzymes, xenF, xenD, and xenC, coordinately participate in the conversion to xenoacremone B (PubMed:34900544). XenF catalyzes sigmatropic rearrangement to form an A-ring, which leads to an unusual intermediate with a hexane ring, which is required for the formation of the tricarbocyclic product (PubMed:34900544). Epoxidation catalyzed by xenD and the formation of the paracyclophane ether catalyzed by xenC initiate a spontaneous intramolecular Diels-Alder (IMDA) reaction to yield xenoacremone B (PubMed:34900544). Spontaneous hydration of xenoacremone B leads to the formation of xenoacremone A, which undergoes subsequent methylation to afford xenoacremone C (PubMed:34900544).</text>
</comment>
<comment type="pathway">
    <text evidence="3">Mycotoxin biosynthesis.</text>
</comment>
<comment type="subunit">
    <text evidence="2">Homodimer.</text>
</comment>
<comment type="disruption phenotype">
    <text evidence="3">Does not affect the production of xenoacremones A and B but leads to the accumulation of 8.</text>
</comment>
<comment type="similarity">
    <text evidence="5">Belongs to the AB hydrolase superfamily. FUS2 hydrolase family.</text>
</comment>
<organism>
    <name type="scientific">Xenoacremonium sinensis</name>
    <name type="common">Endophyte fungus</name>
    <dbReference type="NCBI Taxonomy" id="2480843"/>
    <lineage>
        <taxon>Eukaryota</taxon>
        <taxon>Fungi</taxon>
        <taxon>Dikarya</taxon>
        <taxon>Ascomycota</taxon>
        <taxon>Pezizomycotina</taxon>
        <taxon>Sordariomycetes</taxon>
        <taxon>Hypocreomycetidae</taxon>
        <taxon>Hypocreales</taxon>
        <taxon>Nectriaceae</taxon>
        <taxon>Xenoacremonium</taxon>
    </lineage>
</organism>
<feature type="chain" id="PRO_0000456860" description="Alpha/beta hydrolase xenA">
    <location>
        <begin position="1"/>
        <end position="425"/>
    </location>
</feature>
<feature type="active site" evidence="1">
    <location>
        <position position="366"/>
    </location>
</feature>
<gene>
    <name evidence="4" type="primary">xenA</name>
</gene>
<evidence type="ECO:0000250" key="1">
    <source>
        <dbReference type="UniProtKB" id="Q4WZB3"/>
    </source>
</evidence>
<evidence type="ECO:0000250" key="2">
    <source>
        <dbReference type="UniProtKB" id="Q93NG6"/>
    </source>
</evidence>
<evidence type="ECO:0000269" key="3">
    <source>
    </source>
</evidence>
<evidence type="ECO:0000303" key="4">
    <source>
    </source>
</evidence>
<evidence type="ECO:0000305" key="5"/>
<proteinExistence type="evidence at protein level"/>
<name>XENA_XENSI</name>
<sequence>MFTFSPSFMFDFELTRILGSASSGGCDVGEFKSALNTIKKNDPESWYAAWKQQAERAQKIADEAAKAGYRVLARNAYLRASNYFRATSYMFNNDDARVIPFTDKSIACFKRATELMDGEVLSVDIPYEDGITLPGYLFLPPQYARVPGKIPVVMYAAGADSTKEELYFLYGGTGPQLGYAILCLEGPGQGLLLKKNKIPLRPDFEVVAAKVLDFLDDLSRSQPALELDLGRIAMAGAATGGYFALRAATDPRIKACVSIDPFFSLWELSLTRVPQAFFKLWDSGWVPDGTFDAFTDRHARGNFQAGWEINLGKSSMGVEKATGMFRRFKQFTLEPEDGTKILDKVTCPVFITGPGSGQEMYASADDSTFKIQRLLTKVPDSKKEIWVPNDVADGGLTAKIGAWALLAQKTFEFLDKHFEVKRKEL</sequence>
<protein>
    <recommendedName>
        <fullName evidence="4">Alpha/beta hydrolase xenA</fullName>
        <ecNumber evidence="3">3.7.1.-</ecNumber>
    </recommendedName>
    <alternativeName>
        <fullName evidence="4">Xenoacremones biosynthesis cluster protein A</fullName>
    </alternativeName>
</protein>
<keyword id="KW-0378">Hydrolase</keyword>